<protein>
    <recommendedName>
        <fullName>Serrate RNA effector molecule homolog</fullName>
    </recommendedName>
    <alternativeName>
        <fullName>Arsenite-resistance protein 2 homolog</fullName>
    </alternativeName>
</protein>
<keyword id="KW-0539">Nucleus</keyword>
<keyword id="KW-0597">Phosphoprotein</keyword>
<keyword id="KW-1185">Reference proteome</keyword>
<keyword id="KW-0943">RNA-mediated gene silencing</keyword>
<proteinExistence type="inferred from homology"/>
<organism>
    <name type="scientific">Drosophila persimilis</name>
    <name type="common">Fruit fly</name>
    <dbReference type="NCBI Taxonomy" id="7234"/>
    <lineage>
        <taxon>Eukaryota</taxon>
        <taxon>Metazoa</taxon>
        <taxon>Ecdysozoa</taxon>
        <taxon>Arthropoda</taxon>
        <taxon>Hexapoda</taxon>
        <taxon>Insecta</taxon>
        <taxon>Pterygota</taxon>
        <taxon>Neoptera</taxon>
        <taxon>Endopterygota</taxon>
        <taxon>Diptera</taxon>
        <taxon>Brachycera</taxon>
        <taxon>Muscomorpha</taxon>
        <taxon>Ephydroidea</taxon>
        <taxon>Drosophilidae</taxon>
        <taxon>Drosophila</taxon>
        <taxon>Sophophora</taxon>
    </lineage>
</organism>
<gene>
    <name type="primary">Ars2</name>
    <name type="ORF">GL11804</name>
</gene>
<comment type="function">
    <text evidence="1">Acts as a mediator between the cap-binding complex (CBC) and RNA-mediated gene silencing (RNAi). Involved in innate immunity via the short interfering RNAs (siRNAs) processing machinery by restricting the viral RNA production. Also involved microRNA (miRNA)-mediated silencing by contributing to the stability and delivery of primary miRNA transcripts to the primary miRNA processing complex containing drosha and pasha (By similarity).</text>
</comment>
<comment type="subunit">
    <text evidence="1">Interacts with cbp20, Dcr-2 and pasha.</text>
</comment>
<comment type="subcellular location">
    <subcellularLocation>
        <location evidence="1">Nucleus</location>
    </subcellularLocation>
</comment>
<comment type="similarity">
    <text evidence="3">Belongs to the ARS2 family.</text>
</comment>
<evidence type="ECO:0000250" key="1"/>
<evidence type="ECO:0000256" key="2">
    <source>
        <dbReference type="SAM" id="MobiDB-lite"/>
    </source>
</evidence>
<evidence type="ECO:0000305" key="3"/>
<reference key="1">
    <citation type="journal article" date="2007" name="Nature">
        <title>Evolution of genes and genomes on the Drosophila phylogeny.</title>
        <authorList>
            <consortium name="Drosophila 12 genomes consortium"/>
        </authorList>
    </citation>
    <scope>NUCLEOTIDE SEQUENCE [LARGE SCALE GENOMIC DNA]</scope>
    <source>
        <strain>MSH-3 / Tucson 14011-0111.49</strain>
    </source>
</reference>
<accession>B4H732</accession>
<name>SRRT_DROPE</name>
<sequence>MADSDDEYDRKRRDKFRGERESYRTERRDERRPIGGAGGGRDEWSERNPFRGGGAGGGGAPRHRPDYSDYRGPGPRARYGSPVRDMPPPKRMRSDWGDGDGRPGPRYGGYDPYLMQAWTDHYQSMHSAYHHASHPPPVRELPIIGGDTLTQPAMLNLKQFLDTQDENISDSEVMRKYTEYKTDFKRQQLNEFFVAHKDEEWFKNKYHPEDSVNRSEEQRGFLRRRTDVFVELLENGTIGSVKVDSSHGDALIRVLDTCVIKLEGGTDEDLKVLDEKPKEALVFDRKPESVDPTTVVENTPKSPKKEKEEDELPLIVSPQRIALKPVNSDDENWDDAEVEDAPPKKPEEEEPKESEPIPEIKQKQKKEKKKKIKKRKRNSSSDEESSSSESESSSSSSEEEEEDDEKLKAKYDVEDGLRAEQKAEAEKDQAEAAKAKLGSVSPKEEISPEKSAADPEVEGEAKEDGKQAEKSPKSDDEKKQENGDAAKVESAAEPATGDAQGEVKPVTIDLDKVNPPRDMHRTSSIFLRNLAPSITKAEIEALCSRFSGYLRTAIADPLVERRWYRRGWITFTRDVNIKEICWSLNNQRLRDCEMGAIVNRDLSRRVRPANGITAHKQVVRSDIKLCARIVMNLDEKFKLWSEGPLSKPSPASDSEATAANGSGSSYGFNSKNPVLQNITDYLIEEASAEEEELLGLSGDRKDGEGEPIERDEQLLSVLDRLVLYLRIVHSVDYYNHCEYPYEDEMPNRCGIIHARGPAPSRVTSNELNEYIKSYEGKLLQFLTKTALLSEDQIKDLGAKNADTEVEKFVQANTQELAKDKWLCPLSGKKFKGPEFIRKHIFNKHEEKVDEVRKEVQYFNNYLRDPKRPQLPEHPGSVKRPETESVRGPGGYRPPMYTPMSGMPYSFGGHMMGGGRGGRHFPPARRELPLEHHRRLVGYHDLDAPSNSDIFD</sequence>
<feature type="chain" id="PRO_0000385220" description="Serrate RNA effector molecule homolog">
    <location>
        <begin position="1"/>
        <end position="951"/>
    </location>
</feature>
<feature type="region of interest" description="Disordered" evidence="2">
    <location>
        <begin position="1"/>
        <end position="108"/>
    </location>
</feature>
<feature type="region of interest" description="Disordered" evidence="2">
    <location>
        <begin position="283"/>
        <end position="515"/>
    </location>
</feature>
<feature type="region of interest" description="Disordered" evidence="2">
    <location>
        <begin position="644"/>
        <end position="664"/>
    </location>
</feature>
<feature type="region of interest" description="Disordered" evidence="2">
    <location>
        <begin position="864"/>
        <end position="893"/>
    </location>
</feature>
<feature type="compositionally biased region" description="Basic and acidic residues" evidence="2">
    <location>
        <begin position="8"/>
        <end position="33"/>
    </location>
</feature>
<feature type="compositionally biased region" description="Basic and acidic residues" evidence="2">
    <location>
        <begin position="40"/>
        <end position="49"/>
    </location>
</feature>
<feature type="compositionally biased region" description="Gly residues" evidence="2">
    <location>
        <begin position="51"/>
        <end position="60"/>
    </location>
</feature>
<feature type="compositionally biased region" description="Basic and acidic residues" evidence="2">
    <location>
        <begin position="92"/>
        <end position="103"/>
    </location>
</feature>
<feature type="compositionally biased region" description="Acidic residues" evidence="2">
    <location>
        <begin position="328"/>
        <end position="340"/>
    </location>
</feature>
<feature type="compositionally biased region" description="Basic and acidic residues" evidence="2">
    <location>
        <begin position="341"/>
        <end position="362"/>
    </location>
</feature>
<feature type="compositionally biased region" description="Basic residues" evidence="2">
    <location>
        <begin position="363"/>
        <end position="378"/>
    </location>
</feature>
<feature type="compositionally biased region" description="Low complexity" evidence="2">
    <location>
        <begin position="387"/>
        <end position="396"/>
    </location>
</feature>
<feature type="compositionally biased region" description="Basic and acidic residues" evidence="2">
    <location>
        <begin position="405"/>
        <end position="434"/>
    </location>
</feature>
<feature type="compositionally biased region" description="Basic and acidic residues" evidence="2">
    <location>
        <begin position="442"/>
        <end position="487"/>
    </location>
</feature>
<feature type="compositionally biased region" description="Polar residues" evidence="2">
    <location>
        <begin position="649"/>
        <end position="664"/>
    </location>
</feature>
<feature type="modified residue" description="Phosphotyrosine" evidence="1">
    <location>
        <position position="79"/>
    </location>
</feature>
<feature type="modified residue" description="Phosphoserine" evidence="1">
    <location>
        <position position="81"/>
    </location>
</feature>
<feature type="modified residue" description="Phosphothreonine" evidence="1">
    <location>
        <position position="299"/>
    </location>
</feature>
<feature type="modified residue" description="Phosphoserine" evidence="1">
    <location>
        <position position="302"/>
    </location>
</feature>
<feature type="modified residue" description="Phosphoserine" evidence="1">
    <location>
        <position position="328"/>
    </location>
</feature>
<feature type="modified residue" description="Phosphoserine" evidence="1">
    <location>
        <position position="354"/>
    </location>
</feature>
<feature type="modified residue" description="Phosphoserine" evidence="1">
    <location>
        <position position="441"/>
    </location>
</feature>
<dbReference type="EMBL" id="CH479216">
    <property type="protein sequence ID" value="EDW33565.1"/>
    <property type="molecule type" value="Genomic_DNA"/>
</dbReference>
<dbReference type="RefSeq" id="XP_002026596.1">
    <property type="nucleotide sequence ID" value="XM_002026560.1"/>
</dbReference>
<dbReference type="SMR" id="B4H732"/>
<dbReference type="STRING" id="7234.B4H732"/>
<dbReference type="EnsemblMetazoa" id="FBtr0177419">
    <property type="protein sequence ID" value="FBpp0175911"/>
    <property type="gene ID" value="FBgn0149413"/>
</dbReference>
<dbReference type="EnsemblMetazoa" id="XM_026985352.1">
    <property type="protein sequence ID" value="XP_026841153.1"/>
    <property type="gene ID" value="LOC6601552"/>
</dbReference>
<dbReference type="EnsemblMetazoa" id="XM_026985353.1">
    <property type="protein sequence ID" value="XP_026841154.1"/>
    <property type="gene ID" value="LOC6601552"/>
</dbReference>
<dbReference type="EnsemblMetazoa" id="XM_026985354.1">
    <property type="protein sequence ID" value="XP_026841155.1"/>
    <property type="gene ID" value="LOC6601552"/>
</dbReference>
<dbReference type="EnsemblMetazoa" id="XM_026985355.1">
    <property type="protein sequence ID" value="XP_026841156.1"/>
    <property type="gene ID" value="LOC6601552"/>
</dbReference>
<dbReference type="eggNOG" id="KOG2295">
    <property type="taxonomic scope" value="Eukaryota"/>
</dbReference>
<dbReference type="HOGENOM" id="CLU_008560_0_0_1"/>
<dbReference type="OMA" id="GARDEWS"/>
<dbReference type="OrthoDB" id="342064at2759"/>
<dbReference type="PhylomeDB" id="B4H732"/>
<dbReference type="Proteomes" id="UP000008744">
    <property type="component" value="Unassembled WGS sequence"/>
</dbReference>
<dbReference type="GO" id="GO:0016604">
    <property type="term" value="C:nuclear body"/>
    <property type="evidence" value="ECO:0007669"/>
    <property type="project" value="TreeGrafter"/>
</dbReference>
<dbReference type="GO" id="GO:0005654">
    <property type="term" value="C:nucleoplasm"/>
    <property type="evidence" value="ECO:0000250"/>
    <property type="project" value="UniProtKB"/>
</dbReference>
<dbReference type="GO" id="GO:0003676">
    <property type="term" value="F:nucleic acid binding"/>
    <property type="evidence" value="ECO:0007669"/>
    <property type="project" value="InterPro"/>
</dbReference>
<dbReference type="GO" id="GO:0050829">
    <property type="term" value="P:defense response to Gram-negative bacterium"/>
    <property type="evidence" value="ECO:0007669"/>
    <property type="project" value="EnsemblMetazoa"/>
</dbReference>
<dbReference type="GO" id="GO:0045071">
    <property type="term" value="P:negative regulation of viral genome replication"/>
    <property type="evidence" value="ECO:0007669"/>
    <property type="project" value="EnsemblMetazoa"/>
</dbReference>
<dbReference type="GO" id="GO:0031053">
    <property type="term" value="P:primary miRNA processing"/>
    <property type="evidence" value="ECO:0000250"/>
    <property type="project" value="UniProtKB"/>
</dbReference>
<dbReference type="GO" id="GO:0035194">
    <property type="term" value="P:regulatory ncRNA-mediated post-transcriptional gene silencing"/>
    <property type="evidence" value="ECO:0000250"/>
    <property type="project" value="UniProtKB"/>
</dbReference>
<dbReference type="GO" id="GO:0030422">
    <property type="term" value="P:siRNA processing"/>
    <property type="evidence" value="ECO:0007669"/>
    <property type="project" value="EnsemblMetazoa"/>
</dbReference>
<dbReference type="InterPro" id="IPR035979">
    <property type="entry name" value="RBD_domain_sf"/>
</dbReference>
<dbReference type="InterPro" id="IPR039727">
    <property type="entry name" value="SE/Ars2"/>
</dbReference>
<dbReference type="InterPro" id="IPR007042">
    <property type="entry name" value="SERRATE/Ars2_C"/>
</dbReference>
<dbReference type="InterPro" id="IPR021933">
    <property type="entry name" value="SERRATE/Ars2_N"/>
</dbReference>
<dbReference type="PANTHER" id="PTHR13165">
    <property type="entry name" value="ARSENITE-RESISTANCE PROTEIN 2"/>
    <property type="match status" value="1"/>
</dbReference>
<dbReference type="PANTHER" id="PTHR13165:SF0">
    <property type="entry name" value="SERRATE RNA EFFECTOR MOLECULE HOMOLOG"/>
    <property type="match status" value="1"/>
</dbReference>
<dbReference type="Pfam" id="PF04959">
    <property type="entry name" value="ARS2"/>
    <property type="match status" value="1"/>
</dbReference>
<dbReference type="Pfam" id="PF12066">
    <property type="entry name" value="SERRATE_Ars2_N"/>
    <property type="match status" value="1"/>
</dbReference>
<dbReference type="SUPFAM" id="SSF54928">
    <property type="entry name" value="RNA-binding domain, RBD"/>
    <property type="match status" value="1"/>
</dbReference>